<accession>B8HLE8</accession>
<proteinExistence type="inferred from homology"/>
<gene>
    <name type="primary">ndhK2</name>
    <name type="ordered locus">Cyan7425_4708</name>
</gene>
<keyword id="KW-0004">4Fe-4S</keyword>
<keyword id="KW-0408">Iron</keyword>
<keyword id="KW-0411">Iron-sulfur</keyword>
<keyword id="KW-0472">Membrane</keyword>
<keyword id="KW-0479">Metal-binding</keyword>
<keyword id="KW-0520">NAD</keyword>
<keyword id="KW-0521">NADP</keyword>
<keyword id="KW-0618">Plastoquinone</keyword>
<keyword id="KW-0874">Quinone</keyword>
<keyword id="KW-0793">Thylakoid</keyword>
<keyword id="KW-1278">Translocase</keyword>
<keyword id="KW-0813">Transport</keyword>
<name>NDHK2_CYAP4</name>
<organism>
    <name type="scientific">Cyanothece sp. (strain PCC 7425 / ATCC 29141)</name>
    <dbReference type="NCBI Taxonomy" id="395961"/>
    <lineage>
        <taxon>Bacteria</taxon>
        <taxon>Bacillati</taxon>
        <taxon>Cyanobacteriota</taxon>
        <taxon>Cyanophyceae</taxon>
        <taxon>Gomontiellales</taxon>
        <taxon>Cyanothecaceae</taxon>
        <taxon>Cyanothece</taxon>
    </lineage>
</organism>
<evidence type="ECO:0000250" key="1"/>
<evidence type="ECO:0000305" key="2"/>
<dbReference type="EC" id="7.1.1.-"/>
<dbReference type="EMBL" id="CP001344">
    <property type="protein sequence ID" value="ACL47013.1"/>
    <property type="molecule type" value="Genomic_DNA"/>
</dbReference>
<dbReference type="SMR" id="B8HLE8"/>
<dbReference type="STRING" id="395961.Cyan7425_4708"/>
<dbReference type="KEGG" id="cyn:Cyan7425_4708"/>
<dbReference type="eggNOG" id="COG0377">
    <property type="taxonomic scope" value="Bacteria"/>
</dbReference>
<dbReference type="HOGENOM" id="CLU_055737_2_1_3"/>
<dbReference type="OrthoDB" id="9786737at2"/>
<dbReference type="GO" id="GO:0031676">
    <property type="term" value="C:plasma membrane-derived thylakoid membrane"/>
    <property type="evidence" value="ECO:0007669"/>
    <property type="project" value="UniProtKB-SubCell"/>
</dbReference>
<dbReference type="GO" id="GO:0045271">
    <property type="term" value="C:respiratory chain complex I"/>
    <property type="evidence" value="ECO:0007669"/>
    <property type="project" value="TreeGrafter"/>
</dbReference>
<dbReference type="GO" id="GO:0051539">
    <property type="term" value="F:4 iron, 4 sulfur cluster binding"/>
    <property type="evidence" value="ECO:0007669"/>
    <property type="project" value="UniProtKB-KW"/>
</dbReference>
<dbReference type="GO" id="GO:0005506">
    <property type="term" value="F:iron ion binding"/>
    <property type="evidence" value="ECO:0007669"/>
    <property type="project" value="UniProtKB-UniRule"/>
</dbReference>
<dbReference type="GO" id="GO:0008137">
    <property type="term" value="F:NADH dehydrogenase (ubiquinone) activity"/>
    <property type="evidence" value="ECO:0007669"/>
    <property type="project" value="InterPro"/>
</dbReference>
<dbReference type="GO" id="GO:0048038">
    <property type="term" value="F:quinone binding"/>
    <property type="evidence" value="ECO:0007669"/>
    <property type="project" value="UniProtKB-KW"/>
</dbReference>
<dbReference type="GO" id="GO:0009060">
    <property type="term" value="P:aerobic respiration"/>
    <property type="evidence" value="ECO:0007669"/>
    <property type="project" value="TreeGrafter"/>
</dbReference>
<dbReference type="GO" id="GO:0015990">
    <property type="term" value="P:electron transport coupled proton transport"/>
    <property type="evidence" value="ECO:0007669"/>
    <property type="project" value="TreeGrafter"/>
</dbReference>
<dbReference type="GO" id="GO:0019684">
    <property type="term" value="P:photosynthesis, light reaction"/>
    <property type="evidence" value="ECO:0007669"/>
    <property type="project" value="UniProtKB-UniRule"/>
</dbReference>
<dbReference type="FunFam" id="3.40.50.12280:FF:000002">
    <property type="entry name" value="NADH-quinone oxidoreductase subunit B"/>
    <property type="match status" value="1"/>
</dbReference>
<dbReference type="Gene3D" id="3.40.50.12280">
    <property type="match status" value="1"/>
</dbReference>
<dbReference type="HAMAP" id="MF_01356">
    <property type="entry name" value="NDH1_NuoB"/>
    <property type="match status" value="1"/>
</dbReference>
<dbReference type="InterPro" id="IPR006137">
    <property type="entry name" value="NADH_UbQ_OxRdtase-like_20kDa"/>
</dbReference>
<dbReference type="InterPro" id="IPR006138">
    <property type="entry name" value="NADH_UQ_OxRdtase_20Kd_su"/>
</dbReference>
<dbReference type="NCBIfam" id="TIGR01957">
    <property type="entry name" value="nuoB_fam"/>
    <property type="match status" value="1"/>
</dbReference>
<dbReference type="NCBIfam" id="NF005012">
    <property type="entry name" value="PRK06411.1"/>
    <property type="match status" value="1"/>
</dbReference>
<dbReference type="PANTHER" id="PTHR11995">
    <property type="entry name" value="NADH DEHYDROGENASE"/>
    <property type="match status" value="1"/>
</dbReference>
<dbReference type="PANTHER" id="PTHR11995:SF14">
    <property type="entry name" value="NADH DEHYDROGENASE [UBIQUINONE] IRON-SULFUR PROTEIN 7, MITOCHONDRIAL"/>
    <property type="match status" value="1"/>
</dbReference>
<dbReference type="Pfam" id="PF01058">
    <property type="entry name" value="Oxidored_q6"/>
    <property type="match status" value="1"/>
</dbReference>
<dbReference type="SUPFAM" id="SSF56770">
    <property type="entry name" value="HydA/Nqo6-like"/>
    <property type="match status" value="1"/>
</dbReference>
<dbReference type="PROSITE" id="PS01150">
    <property type="entry name" value="COMPLEX1_20K"/>
    <property type="match status" value="1"/>
</dbReference>
<protein>
    <recommendedName>
        <fullName>NAD(P)H-quinone oxidoreductase subunit K 2</fullName>
        <ecNumber>7.1.1.-</ecNumber>
    </recommendedName>
    <alternativeName>
        <fullName>NAD(P)H dehydrogenase I subunit K 2</fullName>
    </alternativeName>
    <alternativeName>
        <fullName>NDH-1 subunit K 2</fullName>
        <shortName>NDH-K 2</shortName>
    </alternativeName>
</protein>
<comment type="function">
    <text evidence="1">NDH-1 shuttles electrons from an unknown electron donor, via FMN and iron-sulfur (Fe-S) centers, to quinones in the respiratory and/or the photosynthetic chain. The immediate electron acceptor for the enzyme in this species is believed to be plastoquinone. Couples the redox reaction to proton translocation, and thus conserves the redox energy in a proton gradient. Cyanobacterial NDH-1 also plays a role in inorganic carbon-concentration (By similarity).</text>
</comment>
<comment type="catalytic activity">
    <reaction>
        <text>a plastoquinone + NADH + (n+1) H(+)(in) = a plastoquinol + NAD(+) + n H(+)(out)</text>
        <dbReference type="Rhea" id="RHEA:42608"/>
        <dbReference type="Rhea" id="RHEA-COMP:9561"/>
        <dbReference type="Rhea" id="RHEA-COMP:9562"/>
        <dbReference type="ChEBI" id="CHEBI:15378"/>
        <dbReference type="ChEBI" id="CHEBI:17757"/>
        <dbReference type="ChEBI" id="CHEBI:57540"/>
        <dbReference type="ChEBI" id="CHEBI:57945"/>
        <dbReference type="ChEBI" id="CHEBI:62192"/>
    </reaction>
</comment>
<comment type="catalytic activity">
    <reaction>
        <text>a plastoquinone + NADPH + (n+1) H(+)(in) = a plastoquinol + NADP(+) + n H(+)(out)</text>
        <dbReference type="Rhea" id="RHEA:42612"/>
        <dbReference type="Rhea" id="RHEA-COMP:9561"/>
        <dbReference type="Rhea" id="RHEA-COMP:9562"/>
        <dbReference type="ChEBI" id="CHEBI:15378"/>
        <dbReference type="ChEBI" id="CHEBI:17757"/>
        <dbReference type="ChEBI" id="CHEBI:57783"/>
        <dbReference type="ChEBI" id="CHEBI:58349"/>
        <dbReference type="ChEBI" id="CHEBI:62192"/>
    </reaction>
</comment>
<comment type="cofactor">
    <cofactor evidence="1">
        <name>[4Fe-4S] cluster</name>
        <dbReference type="ChEBI" id="CHEBI:49883"/>
    </cofactor>
    <text evidence="1">Binds 1 [4Fe-4S] cluster.</text>
</comment>
<comment type="subunit">
    <text evidence="1">NDH-1 can be composed of about 15 different subunits; different subcomplexes with different compositions have been identified which probably have different functions.</text>
</comment>
<comment type="subcellular location">
    <subcellularLocation>
        <location evidence="1">Cellular thylakoid membrane</location>
        <topology evidence="1">Peripheral membrane protein</topology>
        <orientation evidence="1">Cytoplasmic side</orientation>
    </subcellularLocation>
</comment>
<comment type="similarity">
    <text evidence="2">Belongs to the complex I 20 kDa subunit family.</text>
</comment>
<feature type="chain" id="PRO_0000376188" description="NAD(P)H-quinone oxidoreductase subunit K 2">
    <location>
        <begin position="1"/>
        <end position="259"/>
    </location>
</feature>
<feature type="binding site" evidence="1">
    <location>
        <position position="52"/>
    </location>
    <ligand>
        <name>[4Fe-4S] cluster</name>
        <dbReference type="ChEBI" id="CHEBI:49883"/>
    </ligand>
</feature>
<feature type="binding site" evidence="1">
    <location>
        <position position="53"/>
    </location>
    <ligand>
        <name>[4Fe-4S] cluster</name>
        <dbReference type="ChEBI" id="CHEBI:49883"/>
    </ligand>
</feature>
<feature type="binding site" evidence="1">
    <location>
        <position position="117"/>
    </location>
    <ligand>
        <name>[4Fe-4S] cluster</name>
        <dbReference type="ChEBI" id="CHEBI:49883"/>
    </ligand>
</feature>
<feature type="binding site" evidence="1">
    <location>
        <position position="148"/>
    </location>
    <ligand>
        <name>[4Fe-4S] cluster</name>
        <dbReference type="ChEBI" id="CHEBI:49883"/>
    </ligand>
</feature>
<sequence length="259" mass="29084">MSTPLDHSIRNPISSAEVPPELSENIILTSLDDIYNWARISSIYPLMYGTACCFIEFAAMIASRFDMERFGMFPRASPRQADLIILAGTLTMQMAVPTRRLYDQMPEPKYVIAMGACMITGGMFSADSPTALRGADKLLPIDVYIPGCPPRPEAILDAVTKLRKKIANESPQERQNLQQTHRFYSIAHQMRPAPPLHTGKYLLSETRQQPPQALAEVMGMNIPAFQSPEQQELLLQSGQQRELISREVDEAYKSSSKMY</sequence>
<reference key="1">
    <citation type="journal article" date="2011" name="MBio">
        <title>Novel metabolic attributes of the genus Cyanothece, comprising a group of unicellular nitrogen-fixing Cyanobacteria.</title>
        <authorList>
            <person name="Bandyopadhyay A."/>
            <person name="Elvitigala T."/>
            <person name="Welsh E."/>
            <person name="Stockel J."/>
            <person name="Liberton M."/>
            <person name="Min H."/>
            <person name="Sherman L.A."/>
            <person name="Pakrasi H.B."/>
        </authorList>
    </citation>
    <scope>NUCLEOTIDE SEQUENCE [LARGE SCALE GENOMIC DNA]</scope>
    <source>
        <strain>PCC 7425 / ATCC 29141</strain>
    </source>
</reference>